<proteinExistence type="evidence at protein level"/>
<comment type="function">
    <text evidence="2">Aquaporins form homotetrameric transmembrane channels, with each monomer independently mediating water transport across the plasma membrane along its osmotic gradient. Specifically expressed in lens fiber cells, this aquaporin is crucial for maintaining lens water homeostasis and transparency. Beyond water permeability, it also acts as a cell-to-cell adhesion molecule, forming thin junctions between lens fiber cells that are essential for maintaining the ordered structure and transparency of the lens.</text>
</comment>
<comment type="catalytic activity">
    <reaction evidence="2">
        <text>H2O(in) = H2O(out)</text>
        <dbReference type="Rhea" id="RHEA:29667"/>
        <dbReference type="ChEBI" id="CHEBI:15377"/>
    </reaction>
</comment>
<comment type="activity regulation">
    <text evidence="2">The water channel activity is inhibited by calcium through calmodulin/CALM.</text>
</comment>
<comment type="subunit">
    <text evidence="1 2">Homotetramer; each monomer provides an independent water pore. Two homotetramers on opposing membranes can dimerize, forming a cell-cell junction. Interacts with CALM; the calcium-calmodulin/CALM complex interacts with the cytoplasmic domains of two aquaporins, leading to channel closure (By similarity). Interacts with BFSP1 (via C-terminus); prevents calcium-dependent inhibition of the water channel activity (By similarity).</text>
</comment>
<comment type="subcellular location">
    <subcellularLocation>
        <location evidence="2">Cell membrane</location>
        <topology evidence="3">Multi-pass membrane protein</topology>
    </subcellularLocation>
    <subcellularLocation>
        <location evidence="3">Cell junction</location>
    </subcellularLocation>
    <text evidence="3">Localizes to thin cell-cell junctions in lens fiber cells.</text>
</comment>
<comment type="domain">
    <text evidence="3">Aquaporins contain two tandem repeats each containing three membrane-spanning domains and a pore-forming loop with the signature motif Asn-Pro-Ala (NPA).</text>
</comment>
<comment type="PTM">
    <text evidence="3">Subject to partial proteolytic cleavage in the eye lens core. Partial proteolysis promotes interactions between tetramers from adjoining membranes.</text>
</comment>
<comment type="PTM">
    <text evidence="2">Fatty acylated at Met-1 and Lys-238. The acyl modifications, in decreasing order of ion abundance, are: oleoyl (C18:1) &gt; palmitoyl (C16:0) &gt; stearoyl (C18:0) &gt; eicosenoyl (C20:1) &gt; dihomo-gamma-linolenoyl (C20:3) &gt; palmitoleoyl (C16:1) &gt; eicosadienoyl (C20:2).</text>
</comment>
<comment type="disease">
    <text evidence="5">Defects in Mip are a cause of autosomal dominant cataract. The cataract Fraser mutation (Cat-Fr or Shrivelled) is a transposon-induced splicing error that substitutes a long terminal repeat sequence for the C-terminus of Mip. The lens opacity mutation (LOP) is an AA substitution that inhibits targeting of Mip to the cell-membrane.</text>
</comment>
<comment type="similarity">
    <text evidence="6">Belongs to the MIP/aquaporin (TC 1.A.8) family.</text>
</comment>
<comment type="caution">
    <text evidence="6">Ref.2 sequence was originally thought to originate from Human.</text>
</comment>
<reference key="1">
    <citation type="journal article" date="1996" name="Nat. Genet.">
        <title>Mutations in the founder of the MIP gene family underlie cataract development in the mouse.</title>
        <authorList>
            <person name="Shiels A."/>
            <person name="Bassnett S."/>
        </authorList>
    </citation>
    <scope>NUCLEOTIDE SEQUENCE [MRNA]</scope>
    <scope>VARIANT LOP PRO-51</scope>
    <scope>DISEASE</scope>
    <source>
        <strain>MF1</strain>
        <tissue>Lens</tissue>
    </source>
</reference>
<reference key="2">
    <citation type="submission" date="1997-04" db="EMBL/GenBank/DDBJ databases">
        <authorList>
            <person name="de Peyer O.S."/>
            <person name="Crabbe M.J.C."/>
        </authorList>
    </citation>
    <scope>NUCLEOTIDE SEQUENCE [MRNA]</scope>
</reference>
<reference key="3">
    <citation type="journal article" date="2005" name="Science">
        <title>The transcriptional landscape of the mammalian genome.</title>
        <authorList>
            <person name="Carninci P."/>
            <person name="Kasukawa T."/>
            <person name="Katayama S."/>
            <person name="Gough J."/>
            <person name="Frith M.C."/>
            <person name="Maeda N."/>
            <person name="Oyama R."/>
            <person name="Ravasi T."/>
            <person name="Lenhard B."/>
            <person name="Wells C."/>
            <person name="Kodzius R."/>
            <person name="Shimokawa K."/>
            <person name="Bajic V.B."/>
            <person name="Brenner S.E."/>
            <person name="Batalov S."/>
            <person name="Forrest A.R."/>
            <person name="Zavolan M."/>
            <person name="Davis M.J."/>
            <person name="Wilming L.G."/>
            <person name="Aidinis V."/>
            <person name="Allen J.E."/>
            <person name="Ambesi-Impiombato A."/>
            <person name="Apweiler R."/>
            <person name="Aturaliya R.N."/>
            <person name="Bailey T.L."/>
            <person name="Bansal M."/>
            <person name="Baxter L."/>
            <person name="Beisel K.W."/>
            <person name="Bersano T."/>
            <person name="Bono H."/>
            <person name="Chalk A.M."/>
            <person name="Chiu K.P."/>
            <person name="Choudhary V."/>
            <person name="Christoffels A."/>
            <person name="Clutterbuck D.R."/>
            <person name="Crowe M.L."/>
            <person name="Dalla E."/>
            <person name="Dalrymple B.P."/>
            <person name="de Bono B."/>
            <person name="Della Gatta G."/>
            <person name="di Bernardo D."/>
            <person name="Down T."/>
            <person name="Engstrom P."/>
            <person name="Fagiolini M."/>
            <person name="Faulkner G."/>
            <person name="Fletcher C.F."/>
            <person name="Fukushima T."/>
            <person name="Furuno M."/>
            <person name="Futaki S."/>
            <person name="Gariboldi M."/>
            <person name="Georgii-Hemming P."/>
            <person name="Gingeras T.R."/>
            <person name="Gojobori T."/>
            <person name="Green R.E."/>
            <person name="Gustincich S."/>
            <person name="Harbers M."/>
            <person name="Hayashi Y."/>
            <person name="Hensch T.K."/>
            <person name="Hirokawa N."/>
            <person name="Hill D."/>
            <person name="Huminiecki L."/>
            <person name="Iacono M."/>
            <person name="Ikeo K."/>
            <person name="Iwama A."/>
            <person name="Ishikawa T."/>
            <person name="Jakt M."/>
            <person name="Kanapin A."/>
            <person name="Katoh M."/>
            <person name="Kawasawa Y."/>
            <person name="Kelso J."/>
            <person name="Kitamura H."/>
            <person name="Kitano H."/>
            <person name="Kollias G."/>
            <person name="Krishnan S.P."/>
            <person name="Kruger A."/>
            <person name="Kummerfeld S.K."/>
            <person name="Kurochkin I.V."/>
            <person name="Lareau L.F."/>
            <person name="Lazarevic D."/>
            <person name="Lipovich L."/>
            <person name="Liu J."/>
            <person name="Liuni S."/>
            <person name="McWilliam S."/>
            <person name="Madan Babu M."/>
            <person name="Madera M."/>
            <person name="Marchionni L."/>
            <person name="Matsuda H."/>
            <person name="Matsuzawa S."/>
            <person name="Miki H."/>
            <person name="Mignone F."/>
            <person name="Miyake S."/>
            <person name="Morris K."/>
            <person name="Mottagui-Tabar S."/>
            <person name="Mulder N."/>
            <person name="Nakano N."/>
            <person name="Nakauchi H."/>
            <person name="Ng P."/>
            <person name="Nilsson R."/>
            <person name="Nishiguchi S."/>
            <person name="Nishikawa S."/>
            <person name="Nori F."/>
            <person name="Ohara O."/>
            <person name="Okazaki Y."/>
            <person name="Orlando V."/>
            <person name="Pang K.C."/>
            <person name="Pavan W.J."/>
            <person name="Pavesi G."/>
            <person name="Pesole G."/>
            <person name="Petrovsky N."/>
            <person name="Piazza S."/>
            <person name="Reed J."/>
            <person name="Reid J.F."/>
            <person name="Ring B.Z."/>
            <person name="Ringwald M."/>
            <person name="Rost B."/>
            <person name="Ruan Y."/>
            <person name="Salzberg S.L."/>
            <person name="Sandelin A."/>
            <person name="Schneider C."/>
            <person name="Schoenbach C."/>
            <person name="Sekiguchi K."/>
            <person name="Semple C.A."/>
            <person name="Seno S."/>
            <person name="Sessa L."/>
            <person name="Sheng Y."/>
            <person name="Shibata Y."/>
            <person name="Shimada H."/>
            <person name="Shimada K."/>
            <person name="Silva D."/>
            <person name="Sinclair B."/>
            <person name="Sperling S."/>
            <person name="Stupka E."/>
            <person name="Sugiura K."/>
            <person name="Sultana R."/>
            <person name="Takenaka Y."/>
            <person name="Taki K."/>
            <person name="Tammoja K."/>
            <person name="Tan S.L."/>
            <person name="Tang S."/>
            <person name="Taylor M.S."/>
            <person name="Tegner J."/>
            <person name="Teichmann S.A."/>
            <person name="Ueda H.R."/>
            <person name="van Nimwegen E."/>
            <person name="Verardo R."/>
            <person name="Wei C.L."/>
            <person name="Yagi K."/>
            <person name="Yamanishi H."/>
            <person name="Zabarovsky E."/>
            <person name="Zhu S."/>
            <person name="Zimmer A."/>
            <person name="Hide W."/>
            <person name="Bult C."/>
            <person name="Grimmond S.M."/>
            <person name="Teasdale R.D."/>
            <person name="Liu E.T."/>
            <person name="Brusic V."/>
            <person name="Quackenbush J."/>
            <person name="Wahlestedt C."/>
            <person name="Mattick J.S."/>
            <person name="Hume D.A."/>
            <person name="Kai C."/>
            <person name="Sasaki D."/>
            <person name="Tomaru Y."/>
            <person name="Fukuda S."/>
            <person name="Kanamori-Katayama M."/>
            <person name="Suzuki M."/>
            <person name="Aoki J."/>
            <person name="Arakawa T."/>
            <person name="Iida J."/>
            <person name="Imamura K."/>
            <person name="Itoh M."/>
            <person name="Kato T."/>
            <person name="Kawaji H."/>
            <person name="Kawagashira N."/>
            <person name="Kawashima T."/>
            <person name="Kojima M."/>
            <person name="Kondo S."/>
            <person name="Konno H."/>
            <person name="Nakano K."/>
            <person name="Ninomiya N."/>
            <person name="Nishio T."/>
            <person name="Okada M."/>
            <person name="Plessy C."/>
            <person name="Shibata K."/>
            <person name="Shiraki T."/>
            <person name="Suzuki S."/>
            <person name="Tagami M."/>
            <person name="Waki K."/>
            <person name="Watahiki A."/>
            <person name="Okamura-Oho Y."/>
            <person name="Suzuki H."/>
            <person name="Kawai J."/>
            <person name="Hayashizaki Y."/>
        </authorList>
    </citation>
    <scope>NUCLEOTIDE SEQUENCE [LARGE SCALE MRNA]</scope>
    <source>
        <strain>C57BL/6J</strain>
        <tissue>Eye</tissue>
    </source>
</reference>
<gene>
    <name evidence="7" type="primary">Mip</name>
    <name type="synonym">Palm</name>
</gene>
<evidence type="ECO:0000250" key="1">
    <source>
        <dbReference type="UniProtKB" id="P06624"/>
    </source>
</evidence>
<evidence type="ECO:0000250" key="2">
    <source>
        <dbReference type="UniProtKB" id="P30301"/>
    </source>
</evidence>
<evidence type="ECO:0000250" key="3">
    <source>
        <dbReference type="UniProtKB" id="Q6J8I9"/>
    </source>
</evidence>
<evidence type="ECO:0000256" key="4">
    <source>
        <dbReference type="SAM" id="MobiDB-lite"/>
    </source>
</evidence>
<evidence type="ECO:0000269" key="5">
    <source>
    </source>
</evidence>
<evidence type="ECO:0000305" key="6"/>
<evidence type="ECO:0000312" key="7">
    <source>
        <dbReference type="MGI" id="MGI:96990"/>
    </source>
</evidence>
<keyword id="KW-0965">Cell junction</keyword>
<keyword id="KW-1003">Cell membrane</keyword>
<keyword id="KW-0225">Disease variant</keyword>
<keyword id="KW-0273">Eye lens protein</keyword>
<keyword id="KW-0449">Lipoprotein</keyword>
<keyword id="KW-0472">Membrane</keyword>
<keyword id="KW-0597">Phosphoprotein</keyword>
<keyword id="KW-1185">Reference proteome</keyword>
<keyword id="KW-0677">Repeat</keyword>
<keyword id="KW-0716">Sensory transduction</keyword>
<keyword id="KW-0812">Transmembrane</keyword>
<keyword id="KW-1133">Transmembrane helix</keyword>
<keyword id="KW-0813">Transport</keyword>
<keyword id="KW-0844">Vision</keyword>
<dbReference type="EMBL" id="U27502">
    <property type="protein sequence ID" value="AAC52416.1"/>
    <property type="molecule type" value="mRNA"/>
</dbReference>
<dbReference type="EMBL" id="AF000143">
    <property type="protein sequence ID" value="AAC03168.1"/>
    <property type="molecule type" value="mRNA"/>
</dbReference>
<dbReference type="EMBL" id="AK053490">
    <property type="protein sequence ID" value="BAC35401.1"/>
    <property type="molecule type" value="mRNA"/>
</dbReference>
<dbReference type="EMBL" id="AK053494">
    <property type="protein sequence ID" value="BAC35402.1"/>
    <property type="molecule type" value="mRNA"/>
</dbReference>
<dbReference type="EMBL" id="AK136287">
    <property type="protein sequence ID" value="BAE22916.1"/>
    <property type="molecule type" value="mRNA"/>
</dbReference>
<dbReference type="CCDS" id="CCDS24265.1"/>
<dbReference type="RefSeq" id="NP_032626.2">
    <property type="nucleotide sequence ID" value="NM_008600.5"/>
</dbReference>
<dbReference type="SMR" id="P51180"/>
<dbReference type="BioGRID" id="201425">
    <property type="interactions" value="1"/>
</dbReference>
<dbReference type="FunCoup" id="P51180">
    <property type="interactions" value="316"/>
</dbReference>
<dbReference type="STRING" id="10090.ENSMUSP00000026455"/>
<dbReference type="iPTMnet" id="P51180"/>
<dbReference type="PhosphoSitePlus" id="P51180"/>
<dbReference type="SwissPalm" id="P51180"/>
<dbReference type="PaxDb" id="10090-ENSMUSP00000026455"/>
<dbReference type="ProteomicsDB" id="290083"/>
<dbReference type="Antibodypedia" id="28228">
    <property type="antibodies" value="233 antibodies from 27 providers"/>
</dbReference>
<dbReference type="DNASU" id="17339"/>
<dbReference type="Ensembl" id="ENSMUST00000026455.8">
    <property type="protein sequence ID" value="ENSMUSP00000026455.8"/>
    <property type="gene ID" value="ENSMUSG00000025389.8"/>
</dbReference>
<dbReference type="GeneID" id="17339"/>
<dbReference type="KEGG" id="mmu:17339"/>
<dbReference type="UCSC" id="uc007hlr.1">
    <property type="organism name" value="mouse"/>
</dbReference>
<dbReference type="AGR" id="MGI:96990"/>
<dbReference type="CTD" id="4284"/>
<dbReference type="MGI" id="MGI:96990">
    <property type="gene designation" value="Mip"/>
</dbReference>
<dbReference type="VEuPathDB" id="HostDB:ENSMUSG00000025389"/>
<dbReference type="eggNOG" id="KOG0223">
    <property type="taxonomic scope" value="Eukaryota"/>
</dbReference>
<dbReference type="GeneTree" id="ENSGT00940000156260"/>
<dbReference type="HOGENOM" id="CLU_020019_3_3_1"/>
<dbReference type="InParanoid" id="P51180"/>
<dbReference type="OMA" id="LALNTMH"/>
<dbReference type="OrthoDB" id="3222at2759"/>
<dbReference type="PhylomeDB" id="P51180"/>
<dbReference type="TreeFam" id="TF312940"/>
<dbReference type="Reactome" id="R-MMU-432047">
    <property type="pathway name" value="Passive transport by Aquaporins"/>
</dbReference>
<dbReference type="BioGRID-ORCS" id="17339">
    <property type="hits" value="1 hit in 77 CRISPR screens"/>
</dbReference>
<dbReference type="PRO" id="PR:P51180"/>
<dbReference type="Proteomes" id="UP000000589">
    <property type="component" value="Chromosome 10"/>
</dbReference>
<dbReference type="RNAct" id="P51180">
    <property type="molecule type" value="protein"/>
</dbReference>
<dbReference type="Bgee" id="ENSMUSG00000025389">
    <property type="expression patterns" value="Expressed in lens of camera-type eye and 24 other cell types or tissues"/>
</dbReference>
<dbReference type="GO" id="GO:0070161">
    <property type="term" value="C:anchoring junction"/>
    <property type="evidence" value="ECO:0007669"/>
    <property type="project" value="UniProtKB-SubCell"/>
</dbReference>
<dbReference type="GO" id="GO:0016020">
    <property type="term" value="C:membrane"/>
    <property type="evidence" value="ECO:0000314"/>
    <property type="project" value="MGI"/>
</dbReference>
<dbReference type="GO" id="GO:0005886">
    <property type="term" value="C:plasma membrane"/>
    <property type="evidence" value="ECO:0000314"/>
    <property type="project" value="MGI"/>
</dbReference>
<dbReference type="GO" id="GO:0005516">
    <property type="term" value="F:calmodulin binding"/>
    <property type="evidence" value="ECO:0000250"/>
    <property type="project" value="UniProtKB"/>
</dbReference>
<dbReference type="GO" id="GO:0098631">
    <property type="term" value="F:cell adhesion mediator activity"/>
    <property type="evidence" value="ECO:0000250"/>
    <property type="project" value="UniProtKB"/>
</dbReference>
<dbReference type="GO" id="GO:0015267">
    <property type="term" value="F:channel activity"/>
    <property type="evidence" value="ECO:0000303"/>
    <property type="project" value="UniProtKB"/>
</dbReference>
<dbReference type="GO" id="GO:0005212">
    <property type="term" value="F:structural constituent of eye lens"/>
    <property type="evidence" value="ECO:0000314"/>
    <property type="project" value="MGI"/>
</dbReference>
<dbReference type="GO" id="GO:0015250">
    <property type="term" value="F:water channel activity"/>
    <property type="evidence" value="ECO:0000315"/>
    <property type="project" value="MGI"/>
</dbReference>
<dbReference type="GO" id="GO:0007154">
    <property type="term" value="P:cell communication"/>
    <property type="evidence" value="ECO:0000303"/>
    <property type="project" value="UniProtKB"/>
</dbReference>
<dbReference type="GO" id="GO:1990349">
    <property type="term" value="P:gap junction-mediated intercellular transport"/>
    <property type="evidence" value="ECO:0007669"/>
    <property type="project" value="Ensembl"/>
</dbReference>
<dbReference type="GO" id="GO:0034109">
    <property type="term" value="P:homotypic cell-cell adhesion"/>
    <property type="evidence" value="ECO:0000250"/>
    <property type="project" value="UniProtKB"/>
</dbReference>
<dbReference type="GO" id="GO:0002088">
    <property type="term" value="P:lens development in camera-type eye"/>
    <property type="evidence" value="ECO:0000315"/>
    <property type="project" value="MGI"/>
</dbReference>
<dbReference type="GO" id="GO:0036438">
    <property type="term" value="P:maintenance of lens transparency"/>
    <property type="evidence" value="ECO:0000250"/>
    <property type="project" value="UniProtKB"/>
</dbReference>
<dbReference type="GO" id="GO:0007601">
    <property type="term" value="P:visual perception"/>
    <property type="evidence" value="ECO:0000315"/>
    <property type="project" value="MGI"/>
</dbReference>
<dbReference type="GO" id="GO:0006833">
    <property type="term" value="P:water transport"/>
    <property type="evidence" value="ECO:0000315"/>
    <property type="project" value="MGI"/>
</dbReference>
<dbReference type="CDD" id="cd00333">
    <property type="entry name" value="MIP"/>
    <property type="match status" value="1"/>
</dbReference>
<dbReference type="FunFam" id="1.20.1080.10:FF:000003">
    <property type="entry name" value="Lens fiber major intrinsic"/>
    <property type="match status" value="1"/>
</dbReference>
<dbReference type="Gene3D" id="1.20.1080.10">
    <property type="entry name" value="Glycerol uptake facilitator protein"/>
    <property type="match status" value="1"/>
</dbReference>
<dbReference type="InterPro" id="IPR023271">
    <property type="entry name" value="Aquaporin-like"/>
</dbReference>
<dbReference type="InterPro" id="IPR034294">
    <property type="entry name" value="Aquaporin_transptr"/>
</dbReference>
<dbReference type="InterPro" id="IPR000425">
    <property type="entry name" value="MIP"/>
</dbReference>
<dbReference type="InterPro" id="IPR022357">
    <property type="entry name" value="MIP_CS"/>
</dbReference>
<dbReference type="NCBIfam" id="TIGR00861">
    <property type="entry name" value="MIP"/>
    <property type="match status" value="1"/>
</dbReference>
<dbReference type="PANTHER" id="PTHR19139">
    <property type="entry name" value="AQUAPORIN TRANSPORTER"/>
    <property type="match status" value="1"/>
</dbReference>
<dbReference type="PANTHER" id="PTHR19139:SF39">
    <property type="entry name" value="LENS FIBER MAJOR INTRINSIC PROTEIN"/>
    <property type="match status" value="1"/>
</dbReference>
<dbReference type="Pfam" id="PF00230">
    <property type="entry name" value="MIP"/>
    <property type="match status" value="1"/>
</dbReference>
<dbReference type="PRINTS" id="PR02014">
    <property type="entry name" value="AQUAPORIN2"/>
</dbReference>
<dbReference type="PRINTS" id="PR00783">
    <property type="entry name" value="MINTRINSICP"/>
</dbReference>
<dbReference type="SUPFAM" id="SSF81338">
    <property type="entry name" value="Aquaporin-like"/>
    <property type="match status" value="1"/>
</dbReference>
<dbReference type="PROSITE" id="PS00221">
    <property type="entry name" value="MIP"/>
    <property type="match status" value="1"/>
</dbReference>
<accession>P51180</accession>
<accession>O00285</accession>
<accession>Q3UWJ9</accession>
<accession>Q8BHA2</accession>
<protein>
    <recommendedName>
        <fullName evidence="2">Lens fiber major intrinsic protein</fullName>
    </recommendedName>
    <alternativeName>
        <fullName evidence="2">Aquaporin-0</fullName>
    </alternativeName>
    <alternativeName>
        <fullName evidence="2">MIP26</fullName>
        <shortName evidence="2">MP26</shortName>
    </alternativeName>
</protein>
<sequence>MWELRSASFWRAIFAEFFATLFYVFFGLGASLRWAPGPLHVLQVALAFGLALATLVQTVGHISGAHVNPAVTFAFLVGSQMSLLRAFCYIAAQLLGAVAGAAVLYSVTPPAVRGNLALNTLHAGVSVGQATTVEIFLTLQFVLCIFATYDERRNGRMGSVALAVGFSLTLGHLFGMYYTGAGMNPARSFAPAILTRNFSNHWVYWVGPIIGGGLGSLLYDFLLFPRLKSVSERLSILKGARPSDSNGQPEGTGEPVELKTQAL</sequence>
<organism>
    <name type="scientific">Mus musculus</name>
    <name type="common">Mouse</name>
    <dbReference type="NCBI Taxonomy" id="10090"/>
    <lineage>
        <taxon>Eukaryota</taxon>
        <taxon>Metazoa</taxon>
        <taxon>Chordata</taxon>
        <taxon>Craniata</taxon>
        <taxon>Vertebrata</taxon>
        <taxon>Euteleostomi</taxon>
        <taxon>Mammalia</taxon>
        <taxon>Eutheria</taxon>
        <taxon>Euarchontoglires</taxon>
        <taxon>Glires</taxon>
        <taxon>Rodentia</taxon>
        <taxon>Myomorpha</taxon>
        <taxon>Muroidea</taxon>
        <taxon>Muridae</taxon>
        <taxon>Murinae</taxon>
        <taxon>Mus</taxon>
        <taxon>Mus</taxon>
    </lineage>
</organism>
<name>MIP_MOUSE</name>
<feature type="chain" id="PRO_0000063913" description="Lens fiber major intrinsic protein">
    <location>
        <begin position="1"/>
        <end position="263"/>
    </location>
</feature>
<feature type="topological domain" description="Cytoplasmic" evidence="1">
    <location>
        <begin position="1"/>
        <end position="9"/>
    </location>
</feature>
<feature type="transmembrane region" description="Helical; Name=1" evidence="1">
    <location>
        <begin position="10"/>
        <end position="29"/>
    </location>
</feature>
<feature type="topological domain" description="Extracellular" evidence="1">
    <location>
        <begin position="30"/>
        <end position="41"/>
    </location>
</feature>
<feature type="transmembrane region" description="Helical; Name=2" evidence="1">
    <location>
        <begin position="42"/>
        <end position="59"/>
    </location>
</feature>
<feature type="topological domain" description="Cytoplasmic" evidence="1">
    <location>
        <begin position="60"/>
        <end position="61"/>
    </location>
</feature>
<feature type="intramembrane region" description="Discontinuously helical" evidence="1">
    <location>
        <begin position="62"/>
        <end position="77"/>
    </location>
</feature>
<feature type="topological domain" description="Cytoplasmic" evidence="1">
    <location>
        <begin position="78"/>
        <end position="82"/>
    </location>
</feature>
<feature type="transmembrane region" description="Helical; Name=3" evidence="1">
    <location>
        <begin position="83"/>
        <end position="106"/>
    </location>
</feature>
<feature type="topological domain" description="Extracellular" evidence="1">
    <location>
        <begin position="107"/>
        <end position="127"/>
    </location>
</feature>
<feature type="transmembrane region" description="Helical; Name=4" evidence="1">
    <location>
        <begin position="128"/>
        <end position="148"/>
    </location>
</feature>
<feature type="topological domain" description="Cytoplasmic" evidence="1">
    <location>
        <begin position="149"/>
        <end position="156"/>
    </location>
</feature>
<feature type="transmembrane region" description="Helical; Name=5" evidence="1">
    <location>
        <begin position="157"/>
        <end position="175"/>
    </location>
</feature>
<feature type="topological domain" description="Extracellular" evidence="1">
    <location>
        <begin position="176"/>
        <end position="178"/>
    </location>
</feature>
<feature type="intramembrane region" description="Discontinuously helical" evidence="1">
    <location>
        <begin position="179"/>
        <end position="193"/>
    </location>
</feature>
<feature type="topological domain" description="Extracellular" evidence="1">
    <location>
        <begin position="194"/>
        <end position="200"/>
    </location>
</feature>
<feature type="transmembrane region" description="Helical; Name=6" evidence="1">
    <location>
        <begin position="201"/>
        <end position="222"/>
    </location>
</feature>
<feature type="topological domain" description="Cytoplasmic" evidence="1">
    <location>
        <begin position="223"/>
        <end position="263"/>
    </location>
</feature>
<feature type="region of interest" description="Interaction with CALM" evidence="1">
    <location>
        <begin position="227"/>
        <end position="237"/>
    </location>
</feature>
<feature type="region of interest" description="Disordered" evidence="4">
    <location>
        <begin position="240"/>
        <end position="263"/>
    </location>
</feature>
<feature type="short sequence motif" description="NPA 1" evidence="1">
    <location>
        <begin position="68"/>
        <end position="70"/>
    </location>
</feature>
<feature type="short sequence motif" description="NPA 2" evidence="1">
    <location>
        <begin position="184"/>
        <end position="186"/>
    </location>
</feature>
<feature type="site" description="Important for water channel gating" evidence="1">
    <location>
        <position position="149"/>
    </location>
</feature>
<feature type="site" description="Interaction with BFSP1" evidence="1">
    <location>
        <position position="246"/>
    </location>
</feature>
<feature type="site" description="interaction with BFSP1" evidence="1">
    <location>
        <position position="250"/>
    </location>
</feature>
<feature type="modified residue" description="Phosphoserine" evidence="1">
    <location>
        <position position="235"/>
    </location>
</feature>
<feature type="modified residue" description="Phosphoserine" evidence="1">
    <location>
        <position position="243"/>
    </location>
</feature>
<feature type="modified residue" description="Phosphoserine" evidence="1">
    <location>
        <position position="245"/>
    </location>
</feature>
<feature type="modified residue" description="Deamidated asparagine" evidence="2">
    <location>
        <position position="246"/>
    </location>
</feature>
<feature type="sequence variant" description="In LOP." evidence="5">
    <original>A</original>
    <variation>P</variation>
    <location>
        <position position="51"/>
    </location>
</feature>
<feature type="sequence conflict" description="In Ref. 2; AAC03168." evidence="6" ref="2">
    <original>A</original>
    <variation>S</variation>
    <location>
        <position position="30"/>
    </location>
</feature>
<feature type="sequence conflict" description="In Ref. 1; AAC52416." evidence="6" ref="1">
    <original>A</original>
    <variation>T</variation>
    <location>
        <position position="123"/>
    </location>
</feature>
<feature type="sequence conflict" description="In Ref. 2; AAC03168." evidence="6" ref="2">
    <original>K</original>
    <variation>N</variation>
    <location>
        <position position="259"/>
    </location>
</feature>